<evidence type="ECO:0000255" key="1">
    <source>
        <dbReference type="HAMAP-Rule" id="MF_00302"/>
    </source>
</evidence>
<sequence>MSKNFEWISPDFDLLEKEKTAVKPPSMYHVVLNNDDYTPMDFVIEILERFFSMDIERATQVMLKVHYEGKAICGTFTAEVAETKVAQVTMYSRENEHPLLCTMEQA</sequence>
<reference key="1">
    <citation type="submission" date="2007-03" db="EMBL/GenBank/DDBJ databases">
        <authorList>
            <person name="Heidelberg J."/>
        </authorList>
    </citation>
    <scope>NUCLEOTIDE SEQUENCE [LARGE SCALE GENOMIC DNA]</scope>
    <source>
        <strain>ATCC 39541 / Classical Ogawa 395 / O395</strain>
    </source>
</reference>
<reference key="2">
    <citation type="journal article" date="2008" name="PLoS ONE">
        <title>A recalibrated molecular clock and independent origins for the cholera pandemic clones.</title>
        <authorList>
            <person name="Feng L."/>
            <person name="Reeves P.R."/>
            <person name="Lan R."/>
            <person name="Ren Y."/>
            <person name="Gao C."/>
            <person name="Zhou Z."/>
            <person name="Ren Y."/>
            <person name="Cheng J."/>
            <person name="Wang W."/>
            <person name="Wang J."/>
            <person name="Qian W."/>
            <person name="Li D."/>
            <person name="Wang L."/>
        </authorList>
    </citation>
    <scope>NUCLEOTIDE SEQUENCE [LARGE SCALE GENOMIC DNA]</scope>
    <source>
        <strain>ATCC 39541 / Classical Ogawa 395 / O395</strain>
    </source>
</reference>
<proteinExistence type="inferred from homology"/>
<gene>
    <name evidence="1" type="primary">clpS</name>
    <name type="ordered locus">VC0395_A0713</name>
    <name type="ordered locus">VC395_1210</name>
</gene>
<feature type="chain" id="PRO_1000071982" description="ATP-dependent Clp protease adapter protein ClpS">
    <location>
        <begin position="1"/>
        <end position="106"/>
    </location>
</feature>
<organism>
    <name type="scientific">Vibrio cholerae serotype O1 (strain ATCC 39541 / Classical Ogawa 395 / O395)</name>
    <dbReference type="NCBI Taxonomy" id="345073"/>
    <lineage>
        <taxon>Bacteria</taxon>
        <taxon>Pseudomonadati</taxon>
        <taxon>Pseudomonadota</taxon>
        <taxon>Gammaproteobacteria</taxon>
        <taxon>Vibrionales</taxon>
        <taxon>Vibrionaceae</taxon>
        <taxon>Vibrio</taxon>
    </lineage>
</organism>
<dbReference type="EMBL" id="CP000627">
    <property type="protein sequence ID" value="ABQ20689.1"/>
    <property type="molecule type" value="Genomic_DNA"/>
</dbReference>
<dbReference type="EMBL" id="CP001235">
    <property type="protein sequence ID" value="ACP09220.1"/>
    <property type="molecule type" value="Genomic_DNA"/>
</dbReference>
<dbReference type="RefSeq" id="WP_000041728.1">
    <property type="nucleotide sequence ID" value="NZ_JAACZH010000034.1"/>
</dbReference>
<dbReference type="SMR" id="A5F294"/>
<dbReference type="GeneID" id="89514115"/>
<dbReference type="KEGG" id="vco:VC0395_A0713"/>
<dbReference type="KEGG" id="vcr:VC395_1210"/>
<dbReference type="PATRIC" id="fig|345073.21.peg.1177"/>
<dbReference type="eggNOG" id="COG2127">
    <property type="taxonomic scope" value="Bacteria"/>
</dbReference>
<dbReference type="HOGENOM" id="CLU_134358_2_1_6"/>
<dbReference type="OrthoDB" id="9796121at2"/>
<dbReference type="Proteomes" id="UP000000249">
    <property type="component" value="Chromosome 2"/>
</dbReference>
<dbReference type="GO" id="GO:0030163">
    <property type="term" value="P:protein catabolic process"/>
    <property type="evidence" value="ECO:0007669"/>
    <property type="project" value="InterPro"/>
</dbReference>
<dbReference type="GO" id="GO:0006508">
    <property type="term" value="P:proteolysis"/>
    <property type="evidence" value="ECO:0007669"/>
    <property type="project" value="UniProtKB-UniRule"/>
</dbReference>
<dbReference type="FunFam" id="3.30.1390.10:FF:000002">
    <property type="entry name" value="ATP-dependent Clp protease adapter protein ClpS"/>
    <property type="match status" value="1"/>
</dbReference>
<dbReference type="Gene3D" id="3.30.1390.10">
    <property type="match status" value="1"/>
</dbReference>
<dbReference type="HAMAP" id="MF_00302">
    <property type="entry name" value="ClpS"/>
    <property type="match status" value="1"/>
</dbReference>
<dbReference type="InterPro" id="IPR022935">
    <property type="entry name" value="ClpS"/>
</dbReference>
<dbReference type="InterPro" id="IPR003769">
    <property type="entry name" value="ClpS_core"/>
</dbReference>
<dbReference type="InterPro" id="IPR014719">
    <property type="entry name" value="Ribosomal_bL12_C/ClpS-like"/>
</dbReference>
<dbReference type="NCBIfam" id="NF000670">
    <property type="entry name" value="PRK00033.1-3"/>
    <property type="match status" value="1"/>
</dbReference>
<dbReference type="NCBIfam" id="NF000672">
    <property type="entry name" value="PRK00033.1-5"/>
    <property type="match status" value="1"/>
</dbReference>
<dbReference type="PANTHER" id="PTHR33473:SF19">
    <property type="entry name" value="ATP-DEPENDENT CLP PROTEASE ADAPTER PROTEIN CLPS"/>
    <property type="match status" value="1"/>
</dbReference>
<dbReference type="PANTHER" id="PTHR33473">
    <property type="entry name" value="ATP-DEPENDENT CLP PROTEASE ADAPTER PROTEIN CLPS1, CHLOROPLASTIC"/>
    <property type="match status" value="1"/>
</dbReference>
<dbReference type="Pfam" id="PF02617">
    <property type="entry name" value="ClpS"/>
    <property type="match status" value="1"/>
</dbReference>
<dbReference type="SUPFAM" id="SSF54736">
    <property type="entry name" value="ClpS-like"/>
    <property type="match status" value="1"/>
</dbReference>
<accession>A5F294</accession>
<accession>C3LZK4</accession>
<comment type="function">
    <text evidence="1">Involved in the modulation of the specificity of the ClpAP-mediated ATP-dependent protein degradation.</text>
</comment>
<comment type="subunit">
    <text evidence="1">Binds to the N-terminal domain of the chaperone ClpA.</text>
</comment>
<comment type="similarity">
    <text evidence="1">Belongs to the ClpS family.</text>
</comment>
<name>CLPS_VIBC3</name>
<protein>
    <recommendedName>
        <fullName evidence="1">ATP-dependent Clp protease adapter protein ClpS</fullName>
    </recommendedName>
</protein>